<keyword id="KW-1003">Cell membrane</keyword>
<keyword id="KW-0408">Iron</keyword>
<keyword id="KW-0472">Membrane</keyword>
<keyword id="KW-0479">Metal-binding</keyword>
<keyword id="KW-0503">Monooxygenase</keyword>
<keyword id="KW-0560">Oxidoreductase</keyword>
<keyword id="KW-1185">Reference proteome</keyword>
<keyword id="KW-0831">Ubiquinone biosynthesis</keyword>
<sequence>MSRQLSRTDNLIHQFDTILRTLVPHAATASRANPAAGTQDKAMSDAERRHAAGLMRINHTGEVCAQALYQGQGLTAKLHETRDQMEQAAAEEIDHLAWCDERLRELDSRTSYLNPAFYAASFGMGALAGKLGDNISLGFVAATEEQVGRHLDDHMHKLPMGDRRSRAVLEQMRTDEAHHERWALEAGGARFPAPLKLGMRLMSKVMTKSVYTL</sequence>
<feature type="chain" id="PRO_0000338679" description="3-demethoxyubiquinol 3-hydroxylase">
    <location>
        <begin position="1"/>
        <end position="213"/>
    </location>
</feature>
<feature type="binding site" evidence="1">
    <location>
        <position position="62"/>
    </location>
    <ligand>
        <name>Fe cation</name>
        <dbReference type="ChEBI" id="CHEBI:24875"/>
        <label>1</label>
    </ligand>
</feature>
<feature type="binding site" evidence="1">
    <location>
        <position position="92"/>
    </location>
    <ligand>
        <name>Fe cation</name>
        <dbReference type="ChEBI" id="CHEBI:24875"/>
        <label>1</label>
    </ligand>
</feature>
<feature type="binding site" evidence="1">
    <location>
        <position position="92"/>
    </location>
    <ligand>
        <name>Fe cation</name>
        <dbReference type="ChEBI" id="CHEBI:24875"/>
        <label>2</label>
    </ligand>
</feature>
<feature type="binding site" evidence="1">
    <location>
        <position position="95"/>
    </location>
    <ligand>
        <name>Fe cation</name>
        <dbReference type="ChEBI" id="CHEBI:24875"/>
        <label>1</label>
    </ligand>
</feature>
<feature type="binding site" evidence="1">
    <location>
        <position position="144"/>
    </location>
    <ligand>
        <name>Fe cation</name>
        <dbReference type="ChEBI" id="CHEBI:24875"/>
        <label>2</label>
    </ligand>
</feature>
<feature type="binding site" evidence="1">
    <location>
        <position position="176"/>
    </location>
    <ligand>
        <name>Fe cation</name>
        <dbReference type="ChEBI" id="CHEBI:24875"/>
        <label>1</label>
    </ligand>
</feature>
<feature type="binding site" evidence="1">
    <location>
        <position position="176"/>
    </location>
    <ligand>
        <name>Fe cation</name>
        <dbReference type="ChEBI" id="CHEBI:24875"/>
        <label>2</label>
    </ligand>
</feature>
<feature type="binding site" evidence="1">
    <location>
        <position position="179"/>
    </location>
    <ligand>
        <name>Fe cation</name>
        <dbReference type="ChEBI" id="CHEBI:24875"/>
        <label>2</label>
    </ligand>
</feature>
<gene>
    <name evidence="1" type="primary">coq7</name>
    <name type="ordered locus">Csal_0912</name>
</gene>
<dbReference type="EC" id="1.14.99.60" evidence="1"/>
<dbReference type="EMBL" id="CP000285">
    <property type="protein sequence ID" value="ABE58269.1"/>
    <property type="molecule type" value="Genomic_DNA"/>
</dbReference>
<dbReference type="RefSeq" id="WP_011506215.1">
    <property type="nucleotide sequence ID" value="NC_007963.1"/>
</dbReference>
<dbReference type="SMR" id="Q1QZ39"/>
<dbReference type="STRING" id="290398.Csal_0912"/>
<dbReference type="GeneID" id="95333668"/>
<dbReference type="KEGG" id="csa:Csal_0912"/>
<dbReference type="eggNOG" id="COG2941">
    <property type="taxonomic scope" value="Bacteria"/>
</dbReference>
<dbReference type="HOGENOM" id="CLU_088601_0_0_6"/>
<dbReference type="OrthoDB" id="5192789at2"/>
<dbReference type="UniPathway" id="UPA00232"/>
<dbReference type="Proteomes" id="UP000000239">
    <property type="component" value="Chromosome"/>
</dbReference>
<dbReference type="GO" id="GO:0005886">
    <property type="term" value="C:plasma membrane"/>
    <property type="evidence" value="ECO:0007669"/>
    <property type="project" value="UniProtKB-SubCell"/>
</dbReference>
<dbReference type="GO" id="GO:0008682">
    <property type="term" value="F:3-demethoxyubiquinol 3-hydroxylase activity"/>
    <property type="evidence" value="ECO:0007669"/>
    <property type="project" value="UniProtKB-EC"/>
</dbReference>
<dbReference type="GO" id="GO:0046872">
    <property type="term" value="F:metal ion binding"/>
    <property type="evidence" value="ECO:0007669"/>
    <property type="project" value="UniProtKB-KW"/>
</dbReference>
<dbReference type="GO" id="GO:0006744">
    <property type="term" value="P:ubiquinone biosynthetic process"/>
    <property type="evidence" value="ECO:0007669"/>
    <property type="project" value="UniProtKB-UniRule"/>
</dbReference>
<dbReference type="CDD" id="cd01042">
    <property type="entry name" value="DMQH"/>
    <property type="match status" value="1"/>
</dbReference>
<dbReference type="Gene3D" id="1.20.1260.10">
    <property type="match status" value="1"/>
</dbReference>
<dbReference type="HAMAP" id="MF_01658">
    <property type="entry name" value="COQ7"/>
    <property type="match status" value="1"/>
</dbReference>
<dbReference type="InterPro" id="IPR047809">
    <property type="entry name" value="COQ7_proteobact"/>
</dbReference>
<dbReference type="InterPro" id="IPR012347">
    <property type="entry name" value="Ferritin-like"/>
</dbReference>
<dbReference type="InterPro" id="IPR009078">
    <property type="entry name" value="Ferritin-like_SF"/>
</dbReference>
<dbReference type="InterPro" id="IPR011566">
    <property type="entry name" value="Ubq_synth_Coq7"/>
</dbReference>
<dbReference type="NCBIfam" id="NF033656">
    <property type="entry name" value="DMQ_monoox_COQ7"/>
    <property type="match status" value="1"/>
</dbReference>
<dbReference type="PANTHER" id="PTHR11237:SF4">
    <property type="entry name" value="5-DEMETHOXYUBIQUINONE HYDROXYLASE, MITOCHONDRIAL"/>
    <property type="match status" value="1"/>
</dbReference>
<dbReference type="PANTHER" id="PTHR11237">
    <property type="entry name" value="COENZYME Q10 BIOSYNTHESIS PROTEIN 7"/>
    <property type="match status" value="1"/>
</dbReference>
<dbReference type="Pfam" id="PF03232">
    <property type="entry name" value="COQ7"/>
    <property type="match status" value="1"/>
</dbReference>
<dbReference type="SUPFAM" id="SSF47240">
    <property type="entry name" value="Ferritin-like"/>
    <property type="match status" value="1"/>
</dbReference>
<comment type="function">
    <text evidence="1">Catalyzes the hydroxylation of 2-nonaprenyl-3-methyl-6-methoxy-1,4-benzoquinol during ubiquinone biosynthesis.</text>
</comment>
<comment type="catalytic activity">
    <reaction evidence="1">
        <text>a 5-methoxy-2-methyl-3-(all-trans-polyprenyl)benzene-1,4-diol + AH2 + O2 = a 3-demethylubiquinol + A + H2O</text>
        <dbReference type="Rhea" id="RHEA:50908"/>
        <dbReference type="Rhea" id="RHEA-COMP:10859"/>
        <dbReference type="Rhea" id="RHEA-COMP:10914"/>
        <dbReference type="ChEBI" id="CHEBI:13193"/>
        <dbReference type="ChEBI" id="CHEBI:15377"/>
        <dbReference type="ChEBI" id="CHEBI:15379"/>
        <dbReference type="ChEBI" id="CHEBI:17499"/>
        <dbReference type="ChEBI" id="CHEBI:84167"/>
        <dbReference type="ChEBI" id="CHEBI:84422"/>
        <dbReference type="EC" id="1.14.99.60"/>
    </reaction>
</comment>
<comment type="cofactor">
    <cofactor evidence="1">
        <name>Fe cation</name>
        <dbReference type="ChEBI" id="CHEBI:24875"/>
    </cofactor>
    <text evidence="1">Binds 2 iron ions per subunit.</text>
</comment>
<comment type="pathway">
    <text evidence="1">Cofactor biosynthesis; ubiquinone biosynthesis.</text>
</comment>
<comment type="subcellular location">
    <subcellularLocation>
        <location evidence="1">Cell membrane</location>
        <topology evidence="1">Peripheral membrane protein</topology>
    </subcellularLocation>
</comment>
<comment type="similarity">
    <text evidence="1">Belongs to the COQ7 family.</text>
</comment>
<accession>Q1QZ39</accession>
<name>COQ7_CHRSD</name>
<evidence type="ECO:0000255" key="1">
    <source>
        <dbReference type="HAMAP-Rule" id="MF_01658"/>
    </source>
</evidence>
<organism>
    <name type="scientific">Chromohalobacter salexigens (strain ATCC BAA-138 / DSM 3043 / CIP 106854 / NCIMB 13768 / 1H11)</name>
    <dbReference type="NCBI Taxonomy" id="290398"/>
    <lineage>
        <taxon>Bacteria</taxon>
        <taxon>Pseudomonadati</taxon>
        <taxon>Pseudomonadota</taxon>
        <taxon>Gammaproteobacteria</taxon>
        <taxon>Oceanospirillales</taxon>
        <taxon>Halomonadaceae</taxon>
        <taxon>Chromohalobacter</taxon>
    </lineage>
</organism>
<protein>
    <recommendedName>
        <fullName evidence="1">3-demethoxyubiquinol 3-hydroxylase</fullName>
        <shortName evidence="1">DMQ hydroxylase</shortName>
        <ecNumber evidence="1">1.14.99.60</ecNumber>
    </recommendedName>
    <alternativeName>
        <fullName evidence="1">2-nonaprenyl-3-methyl-6-methoxy-1,4-benzoquinol hydroxylase</fullName>
    </alternativeName>
</protein>
<reference key="1">
    <citation type="journal article" date="2011" name="Stand. Genomic Sci.">
        <title>Complete genome sequence of the halophilic and highly halotolerant Chromohalobacter salexigens type strain (1H11(T)).</title>
        <authorList>
            <person name="Copeland A."/>
            <person name="O'Connor K."/>
            <person name="Lucas S."/>
            <person name="Lapidus A."/>
            <person name="Berry K.W."/>
            <person name="Detter J.C."/>
            <person name="Del Rio T.G."/>
            <person name="Hammon N."/>
            <person name="Dalin E."/>
            <person name="Tice H."/>
            <person name="Pitluck S."/>
            <person name="Bruce D."/>
            <person name="Goodwin L."/>
            <person name="Han C."/>
            <person name="Tapia R."/>
            <person name="Saunders E."/>
            <person name="Schmutz J."/>
            <person name="Brettin T."/>
            <person name="Larimer F."/>
            <person name="Land M."/>
            <person name="Hauser L."/>
            <person name="Vargas C."/>
            <person name="Nieto J.J."/>
            <person name="Kyrpides N.C."/>
            <person name="Ivanova N."/>
            <person name="Goker M."/>
            <person name="Klenk H.P."/>
            <person name="Csonka L.N."/>
            <person name="Woyke T."/>
        </authorList>
    </citation>
    <scope>NUCLEOTIDE SEQUENCE [LARGE SCALE GENOMIC DNA]</scope>
    <source>
        <strain>ATCC BAA-138 / DSM 3043 / CIP 106854 / NCIMB 13768 / 1H11</strain>
    </source>
</reference>
<proteinExistence type="inferred from homology"/>